<reference key="1">
    <citation type="journal article" date="2016" name="J. Am. Chem. Soc.">
        <title>Phenalenone polyketide cyclization catalyzed by fungal polyketide synthase and flavin-dependent monooxygenase.</title>
        <authorList>
            <person name="Gao S.S."/>
            <person name="Duan A."/>
            <person name="Xu W."/>
            <person name="Yu P."/>
            <person name="Hang L."/>
            <person name="Houk K.N."/>
            <person name="Tang Y."/>
        </authorList>
    </citation>
    <scope>NUCLEOTIDE SEQUENCE [GENOMIC DNA]</scope>
    <scope>FUNCTION</scope>
    <scope>DISRUPTION PHENOTYPE</scope>
    <source>
        <strain>ATCC 10118 / CBS 336.48 / NBRC 31747 / NRRL 1040</strain>
    </source>
</reference>
<reference key="2">
    <citation type="journal article" date="2017" name="J. Am. Chem. Soc.">
        <title>Enzyme-catalyzed intramolecular enantioselective hydroalkoxylation.</title>
        <authorList>
            <person name="Gao S.S."/>
            <person name="Garcia-Borras M."/>
            <person name="Barber J.S."/>
            <person name="Hai Y."/>
            <person name="Duan A."/>
            <person name="Garg N.K."/>
            <person name="Houk K.N."/>
            <person name="Tang Y."/>
        </authorList>
    </citation>
    <scope>FUNCTION</scope>
    <scope>CATALYTIC ACTIVITY</scope>
    <scope>PATHWAY</scope>
</reference>
<comment type="function">
    <text evidence="2 3">O-methyltransferase; part of the gene cluster that mediates the biosynthesis of phenalenones such as herqueinone, compounds that have been reported to treat tumors, bacterial infections and/or mycoses, and rheumatic diseases (PubMed:26978228). The non-reducing polyketide synthase phnA synthesizes the heptaketide backbone and cyclizes it into the angular, hemiketal-containing naphtho-gamma-pyrone prephenalenone. The product template (PT) domain of phnA catalyzes only the C4-C9 aldol condensation, which is unprecedented among known PT domains (PubMed:26978228, PubMed:28240554). The transformation of prephenalenone to phenalenones requires an FAD-dependent monooxygenase phnB, which catalyzes the C2 aromatic hydroxylation of prephenalenone and ring opening of the gamma-pyrone ring simultaneously (PubMed:26978228, PubMed:28240554). Subsequent intramolecular deprotonation of C3 phenolic oxygen accelerates phenalenone ring closure to yield the tricyclic phenalenone core with a C2 hydroxylation (PubMed:26978228, PubMed:28240554). The prenyltransferase phnF further catalyzes reverse C-prenylation of phenalenone by direct electrophilic substitution at C6, or possibly via first a forward O-prenylation of a neighboring phenol in phenalenone, followed by a Claisen rearrangement (PubMed:28240554). The hydroalkoxylation enzyme phnH catalyzes the 5-exo-trig cyclization via acid catalysis after the spontaneous deprotonation of 7-OH, which leads to the formation of the dihydrobenzofuran atrovenetin (PubMed:28240554). Atrovenetin is further converted to deoxyherqueinone by the O-methyltransferase phnC which can methylate C2-OH to stabilize the northern portion of the phenalenone core (PubMed:28240554). Finally, the oxidoreductase phnG converts deoxyherqueinone to herqueinone via C6 hydroxylation (PubMed:28240554).</text>
</comment>
<comment type="catalytic activity">
    <reaction evidence="3">
        <text>(2'R)-atrovenetin + S-adenosyl-L-methionine = deoxyherqueinone + S-adenosyl-L-homocysteine + H(+)</text>
        <dbReference type="Rhea" id="RHEA:62664"/>
        <dbReference type="ChEBI" id="CHEBI:15378"/>
        <dbReference type="ChEBI" id="CHEBI:57856"/>
        <dbReference type="ChEBI" id="CHEBI:59789"/>
        <dbReference type="ChEBI" id="CHEBI:145872"/>
        <dbReference type="ChEBI" id="CHEBI:145874"/>
    </reaction>
    <physiologicalReaction direction="left-to-right" evidence="3">
        <dbReference type="Rhea" id="RHEA:62665"/>
    </physiologicalReaction>
</comment>
<comment type="pathway">
    <text evidence="3">Secondary metabolite biosynthesis.</text>
</comment>
<comment type="disruption phenotype">
    <text evidence="2">Leads to decreased, but does not abolish, production of herqueinone.</text>
</comment>
<comment type="similarity">
    <text evidence="5">Belongs to the class I-like SAM-binding methyltransferase superfamily. Cation-independent O-methyltransferase family. COMT subfamily.</text>
</comment>
<sequence>MDQNTLIKTAQQILDTTTELSKHLAESDIAIPNDLNVGTTSGLWTTHNAEIEALRLKITGLSQNLGMLLEGPHGFLHEYVSVNWEHGALYTLLDHNVLEQIPLDGSKIAIADLATRVGLPADKLLRICRLVATVGIIREDTEGEFSHTAISETLVKDQGYKSFIGFQTFETRVASAHLADSLRKPNPYWNEGQAAFELAWGMPMYDWHREHPEKGKRFAQAMQSVSKNLDAGNDMIIQWVKGSEGLQNGKPLHVVEIQGKTGAFSAELATLYPNAEFEVQDTSADLISRGKQTLDPELASRVKFSQRDLFAVRKCDEVSDFTDNTVVFLLRGVLWNHSDEEVITLLRSFLPAMEHGIKPIVLISDLVSPIWATFESHVERAFRRRDVTLTTMHNVKQRTSTEWSQLLQSADPNFKVCAFPVDLFGIFEN</sequence>
<name>PHNC_PENHR</name>
<organism>
    <name type="scientific">Penicillium herquei</name>
    <dbReference type="NCBI Taxonomy" id="69774"/>
    <lineage>
        <taxon>Eukaryota</taxon>
        <taxon>Fungi</taxon>
        <taxon>Dikarya</taxon>
        <taxon>Ascomycota</taxon>
        <taxon>Pezizomycotina</taxon>
        <taxon>Eurotiomycetes</taxon>
        <taxon>Eurotiomycetidae</taxon>
        <taxon>Eurotiales</taxon>
        <taxon>Aspergillaceae</taxon>
        <taxon>Penicillium</taxon>
    </lineage>
</organism>
<proteinExistence type="evidence at protein level"/>
<feature type="chain" id="PRO_0000446163" description="O-methyltransferase phnC">
    <location>
        <begin position="1"/>
        <end position="429"/>
    </location>
</feature>
<feature type="binding site" evidence="1">
    <location>
        <position position="285"/>
    </location>
    <ligand>
        <name>S-adenosyl-L-methionine</name>
        <dbReference type="ChEBI" id="CHEBI:59789"/>
    </ligand>
</feature>
<protein>
    <recommendedName>
        <fullName evidence="4">O-methyltransferase phnC</fullName>
        <ecNumber evidence="1">2.1.1.-</ecNumber>
    </recommendedName>
    <alternativeName>
        <fullName evidence="4">Phenalenone biosynthesis cluster protein C</fullName>
    </alternativeName>
</protein>
<keyword id="KW-0489">Methyltransferase</keyword>
<keyword id="KW-0949">S-adenosyl-L-methionine</keyword>
<keyword id="KW-0808">Transferase</keyword>
<gene>
    <name evidence="4" type="primary">phnC</name>
</gene>
<accession>A0A142C7A1</accession>
<evidence type="ECO:0000255" key="1">
    <source>
        <dbReference type="PROSITE-ProRule" id="PRU01020"/>
    </source>
</evidence>
<evidence type="ECO:0000269" key="2">
    <source>
    </source>
</evidence>
<evidence type="ECO:0000269" key="3">
    <source>
    </source>
</evidence>
<evidence type="ECO:0000303" key="4">
    <source>
    </source>
</evidence>
<evidence type="ECO:0000305" key="5"/>
<dbReference type="EC" id="2.1.1.-" evidence="1"/>
<dbReference type="EMBL" id="KU641628">
    <property type="protein sequence ID" value="AMP46753.1"/>
    <property type="molecule type" value="Genomic_DNA"/>
</dbReference>
<dbReference type="SMR" id="A0A142C7A1"/>
<dbReference type="GO" id="GO:0008171">
    <property type="term" value="F:O-methyltransferase activity"/>
    <property type="evidence" value="ECO:0007669"/>
    <property type="project" value="InterPro"/>
</dbReference>
<dbReference type="GO" id="GO:0032259">
    <property type="term" value="P:methylation"/>
    <property type="evidence" value="ECO:0007669"/>
    <property type="project" value="UniProtKB-KW"/>
</dbReference>
<dbReference type="GO" id="GO:0044550">
    <property type="term" value="P:secondary metabolite biosynthetic process"/>
    <property type="evidence" value="ECO:0007669"/>
    <property type="project" value="UniProtKB-ARBA"/>
</dbReference>
<dbReference type="Gene3D" id="3.40.50.150">
    <property type="entry name" value="Vaccinia Virus protein VP39"/>
    <property type="match status" value="1"/>
</dbReference>
<dbReference type="Gene3D" id="1.10.10.10">
    <property type="entry name" value="Winged helix-like DNA-binding domain superfamily/Winged helix DNA-binding domain"/>
    <property type="match status" value="1"/>
</dbReference>
<dbReference type="InterPro" id="IPR016461">
    <property type="entry name" value="COMT-like"/>
</dbReference>
<dbReference type="InterPro" id="IPR001077">
    <property type="entry name" value="O_MeTrfase_dom"/>
</dbReference>
<dbReference type="InterPro" id="IPR029063">
    <property type="entry name" value="SAM-dependent_MTases_sf"/>
</dbReference>
<dbReference type="InterPro" id="IPR036388">
    <property type="entry name" value="WH-like_DNA-bd_sf"/>
</dbReference>
<dbReference type="InterPro" id="IPR036390">
    <property type="entry name" value="WH_DNA-bd_sf"/>
</dbReference>
<dbReference type="PANTHER" id="PTHR43712">
    <property type="entry name" value="PUTATIVE (AFU_ORTHOLOGUE AFUA_4G14580)-RELATED"/>
    <property type="match status" value="1"/>
</dbReference>
<dbReference type="PANTHER" id="PTHR43712:SF12">
    <property type="entry name" value="STERIGMATOCYSTIN 8-O-METHYLTRANSFERASE"/>
    <property type="match status" value="1"/>
</dbReference>
<dbReference type="Pfam" id="PF00891">
    <property type="entry name" value="Methyltransf_2"/>
    <property type="match status" value="1"/>
</dbReference>
<dbReference type="SUPFAM" id="SSF53335">
    <property type="entry name" value="S-adenosyl-L-methionine-dependent methyltransferases"/>
    <property type="match status" value="1"/>
</dbReference>
<dbReference type="SUPFAM" id="SSF46785">
    <property type="entry name" value="Winged helix' DNA-binding domain"/>
    <property type="match status" value="1"/>
</dbReference>
<dbReference type="PROSITE" id="PS51683">
    <property type="entry name" value="SAM_OMT_II"/>
    <property type="match status" value="1"/>
</dbReference>